<feature type="chain" id="PRO_0000301488" description="Putative N-acetylmannosamine-6-phosphate 2-epimerase">
    <location>
        <begin position="1"/>
        <end position="222"/>
    </location>
</feature>
<accession>Q4A094</accession>
<reference key="1">
    <citation type="journal article" date="2005" name="Proc. Natl. Acad. Sci. U.S.A.">
        <title>Whole genome sequence of Staphylococcus saprophyticus reveals the pathogenesis of uncomplicated urinary tract infection.</title>
        <authorList>
            <person name="Kuroda M."/>
            <person name="Yamashita A."/>
            <person name="Hirakawa H."/>
            <person name="Kumano M."/>
            <person name="Morikawa K."/>
            <person name="Higashide M."/>
            <person name="Maruyama A."/>
            <person name="Inose Y."/>
            <person name="Matoba K."/>
            <person name="Toh H."/>
            <person name="Kuhara S."/>
            <person name="Hattori M."/>
            <person name="Ohta T."/>
        </authorList>
    </citation>
    <scope>NUCLEOTIDE SEQUENCE [LARGE SCALE GENOMIC DNA]</scope>
    <source>
        <strain>ATCC 15305 / DSM 20229 / NCIMB 8711 / NCTC 7292 / S-41</strain>
    </source>
</reference>
<dbReference type="EC" id="5.1.3.9" evidence="1"/>
<dbReference type="EMBL" id="AP008934">
    <property type="protein sequence ID" value="BAE17517.1"/>
    <property type="molecule type" value="Genomic_DNA"/>
</dbReference>
<dbReference type="RefSeq" id="WP_011302348.1">
    <property type="nucleotide sequence ID" value="NC_007350.1"/>
</dbReference>
<dbReference type="SMR" id="Q4A094"/>
<dbReference type="GeneID" id="3617192"/>
<dbReference type="KEGG" id="ssp:SSP0372"/>
<dbReference type="PATRIC" id="fig|342451.11.peg.377"/>
<dbReference type="eggNOG" id="COG3010">
    <property type="taxonomic scope" value="Bacteria"/>
</dbReference>
<dbReference type="HOGENOM" id="CLU_086300_1_0_9"/>
<dbReference type="OrthoDB" id="9781704at2"/>
<dbReference type="UniPathway" id="UPA00629">
    <property type="reaction ID" value="UER00682"/>
</dbReference>
<dbReference type="Proteomes" id="UP000006371">
    <property type="component" value="Chromosome"/>
</dbReference>
<dbReference type="GO" id="GO:0005829">
    <property type="term" value="C:cytosol"/>
    <property type="evidence" value="ECO:0007669"/>
    <property type="project" value="TreeGrafter"/>
</dbReference>
<dbReference type="GO" id="GO:0047465">
    <property type="term" value="F:N-acylglucosamine-6-phosphate 2-epimerase activity"/>
    <property type="evidence" value="ECO:0007669"/>
    <property type="project" value="UniProtKB-EC"/>
</dbReference>
<dbReference type="GO" id="GO:0005975">
    <property type="term" value="P:carbohydrate metabolic process"/>
    <property type="evidence" value="ECO:0007669"/>
    <property type="project" value="UniProtKB-UniRule"/>
</dbReference>
<dbReference type="GO" id="GO:0006053">
    <property type="term" value="P:N-acetylmannosamine catabolic process"/>
    <property type="evidence" value="ECO:0007669"/>
    <property type="project" value="TreeGrafter"/>
</dbReference>
<dbReference type="GO" id="GO:0019262">
    <property type="term" value="P:N-acetylneuraminate catabolic process"/>
    <property type="evidence" value="ECO:0007669"/>
    <property type="project" value="UniProtKB-UniRule"/>
</dbReference>
<dbReference type="CDD" id="cd04729">
    <property type="entry name" value="NanE"/>
    <property type="match status" value="1"/>
</dbReference>
<dbReference type="FunFam" id="3.20.20.70:FF:000035">
    <property type="entry name" value="Putative N-acetylmannosamine-6-phosphate 2-epimerase"/>
    <property type="match status" value="1"/>
</dbReference>
<dbReference type="Gene3D" id="3.20.20.70">
    <property type="entry name" value="Aldolase class I"/>
    <property type="match status" value="1"/>
</dbReference>
<dbReference type="HAMAP" id="MF_01235">
    <property type="entry name" value="ManNAc6P_epimer"/>
    <property type="match status" value="1"/>
</dbReference>
<dbReference type="InterPro" id="IPR013785">
    <property type="entry name" value="Aldolase_TIM"/>
</dbReference>
<dbReference type="InterPro" id="IPR007260">
    <property type="entry name" value="NanE"/>
</dbReference>
<dbReference type="InterPro" id="IPR011060">
    <property type="entry name" value="RibuloseP-bd_barrel"/>
</dbReference>
<dbReference type="NCBIfam" id="NF002231">
    <property type="entry name" value="PRK01130.1"/>
    <property type="match status" value="1"/>
</dbReference>
<dbReference type="PANTHER" id="PTHR36204">
    <property type="entry name" value="N-ACETYLMANNOSAMINE-6-PHOSPHATE 2-EPIMERASE-RELATED"/>
    <property type="match status" value="1"/>
</dbReference>
<dbReference type="PANTHER" id="PTHR36204:SF1">
    <property type="entry name" value="N-ACETYLMANNOSAMINE-6-PHOSPHATE 2-EPIMERASE-RELATED"/>
    <property type="match status" value="1"/>
</dbReference>
<dbReference type="Pfam" id="PF04131">
    <property type="entry name" value="NanE"/>
    <property type="match status" value="1"/>
</dbReference>
<dbReference type="SUPFAM" id="SSF51366">
    <property type="entry name" value="Ribulose-phoshate binding barrel"/>
    <property type="match status" value="1"/>
</dbReference>
<protein>
    <recommendedName>
        <fullName evidence="1">Putative N-acetylmannosamine-6-phosphate 2-epimerase</fullName>
        <ecNumber evidence="1">5.1.3.9</ecNumber>
    </recommendedName>
    <alternativeName>
        <fullName evidence="1">ManNAc-6-P epimerase</fullName>
    </alternativeName>
</protein>
<organism>
    <name type="scientific">Staphylococcus saprophyticus subsp. saprophyticus (strain ATCC 15305 / DSM 20229 / NCIMB 8711 / NCTC 7292 / S-41)</name>
    <dbReference type="NCBI Taxonomy" id="342451"/>
    <lineage>
        <taxon>Bacteria</taxon>
        <taxon>Bacillati</taxon>
        <taxon>Bacillota</taxon>
        <taxon>Bacilli</taxon>
        <taxon>Bacillales</taxon>
        <taxon>Staphylococcaceae</taxon>
        <taxon>Staphylococcus</taxon>
    </lineage>
</organism>
<evidence type="ECO:0000255" key="1">
    <source>
        <dbReference type="HAMAP-Rule" id="MF_01235"/>
    </source>
</evidence>
<gene>
    <name evidence="1" type="primary">nanE</name>
    <name type="ordered locus">SSP0372</name>
</gene>
<proteinExistence type="inferred from homology"/>
<sequence>MLPQGLIVSCQALPDEPLHSSFIMSKMALAAYEGGAVGIRANSKADIIEIKKEVDLPVIGIVKRDYAHSDVFITATSKEIDELIESNCEVIALDATKQTRPKESLSELVSYIRNKAPNVEIMADISTLEEAKNADELGFDYVGTTLRGYTSYTKGHILYENNYQFLKDVLAHVNAKVIAEGNVITPEMFKDVTDLGVHCTVVGGAITRPKEITKRFINAFDK</sequence>
<comment type="function">
    <text evidence="1">Converts N-acetylmannosamine-6-phosphate (ManNAc-6-P) to N-acetylglucosamine-6-phosphate (GlcNAc-6-P).</text>
</comment>
<comment type="catalytic activity">
    <reaction evidence="1">
        <text>an N-acyl-D-glucosamine 6-phosphate = an N-acyl-D-mannosamine 6-phosphate</text>
        <dbReference type="Rhea" id="RHEA:23932"/>
        <dbReference type="ChEBI" id="CHEBI:57599"/>
        <dbReference type="ChEBI" id="CHEBI:57666"/>
        <dbReference type="EC" id="5.1.3.9"/>
    </reaction>
</comment>
<comment type="pathway">
    <text evidence="1">Amino-sugar metabolism; N-acetylneuraminate degradation; D-fructose 6-phosphate from N-acetylneuraminate: step 3/5.</text>
</comment>
<comment type="similarity">
    <text evidence="1">Belongs to the NanE family.</text>
</comment>
<keyword id="KW-0119">Carbohydrate metabolism</keyword>
<keyword id="KW-0413">Isomerase</keyword>
<keyword id="KW-1185">Reference proteome</keyword>
<name>NANE_STAS1</name>